<gene>
    <name evidence="1" type="primary">potA</name>
    <name type="ordered locus">VV1_2604</name>
</gene>
<name>POTA_VIBVU</name>
<feature type="chain" id="PRO_0000286326" description="Spermidine/putrescine import ATP-binding protein PotA">
    <location>
        <begin position="1"/>
        <end position="377"/>
    </location>
</feature>
<feature type="domain" description="ABC transporter" evidence="1">
    <location>
        <begin position="18"/>
        <end position="248"/>
    </location>
</feature>
<feature type="binding site" evidence="1">
    <location>
        <begin position="50"/>
        <end position="57"/>
    </location>
    <ligand>
        <name>ATP</name>
        <dbReference type="ChEBI" id="CHEBI:30616"/>
    </ligand>
</feature>
<proteinExistence type="inferred from homology"/>
<comment type="function">
    <text evidence="1">Part of the ABC transporter complex PotABCD involved in spermidine/putrescine import. Responsible for energy coupling to the transport system.</text>
</comment>
<comment type="catalytic activity">
    <reaction evidence="1">
        <text>ATP + H2O + polyamine-[polyamine-binding protein]Side 1 = ADP + phosphate + polyamineSide 2 + [polyamine-binding protein]Side 1.</text>
        <dbReference type="EC" id="7.6.2.11"/>
    </reaction>
</comment>
<comment type="subunit">
    <text evidence="1">The complex is composed of two ATP-binding proteins (PotA), two transmembrane proteins (PotB and PotC) and a solute-binding protein (PotD).</text>
</comment>
<comment type="subcellular location">
    <subcellularLocation>
        <location evidence="1">Cell inner membrane</location>
        <topology evidence="1">Peripheral membrane protein</topology>
    </subcellularLocation>
</comment>
<comment type="similarity">
    <text evidence="1">Belongs to the ABC transporter superfamily. Spermidine/putrescine importer (TC 3.A.1.11.1) family.</text>
</comment>
<organism>
    <name type="scientific">Vibrio vulnificus (strain CMCP6)</name>
    <dbReference type="NCBI Taxonomy" id="216895"/>
    <lineage>
        <taxon>Bacteria</taxon>
        <taxon>Pseudomonadati</taxon>
        <taxon>Pseudomonadota</taxon>
        <taxon>Gammaproteobacteria</taxon>
        <taxon>Vibrionales</taxon>
        <taxon>Vibrionaceae</taxon>
        <taxon>Vibrio</taxon>
    </lineage>
</organism>
<dbReference type="EC" id="7.6.2.11" evidence="1"/>
<dbReference type="EMBL" id="AE016795">
    <property type="protein sequence ID" value="AAO10954.1"/>
    <property type="molecule type" value="Genomic_DNA"/>
</dbReference>
<dbReference type="SMR" id="Q8D9J4"/>
<dbReference type="KEGG" id="vvu:VV1_2604"/>
<dbReference type="HOGENOM" id="CLU_000604_1_1_6"/>
<dbReference type="Proteomes" id="UP000002275">
    <property type="component" value="Chromosome 1"/>
</dbReference>
<dbReference type="GO" id="GO:0043190">
    <property type="term" value="C:ATP-binding cassette (ABC) transporter complex"/>
    <property type="evidence" value="ECO:0007669"/>
    <property type="project" value="InterPro"/>
</dbReference>
<dbReference type="GO" id="GO:0015594">
    <property type="term" value="F:ABC-type putrescine transporter activity"/>
    <property type="evidence" value="ECO:0007669"/>
    <property type="project" value="InterPro"/>
</dbReference>
<dbReference type="GO" id="GO:0005524">
    <property type="term" value="F:ATP binding"/>
    <property type="evidence" value="ECO:0007669"/>
    <property type="project" value="UniProtKB-KW"/>
</dbReference>
<dbReference type="GO" id="GO:0016887">
    <property type="term" value="F:ATP hydrolysis activity"/>
    <property type="evidence" value="ECO:0007669"/>
    <property type="project" value="InterPro"/>
</dbReference>
<dbReference type="CDD" id="cd03300">
    <property type="entry name" value="ABC_PotA_N"/>
    <property type="match status" value="1"/>
</dbReference>
<dbReference type="FunFam" id="3.40.50.300:FF:000133">
    <property type="entry name" value="Spermidine/putrescine import ATP-binding protein PotA"/>
    <property type="match status" value="1"/>
</dbReference>
<dbReference type="Gene3D" id="2.40.50.100">
    <property type="match status" value="1"/>
</dbReference>
<dbReference type="Gene3D" id="3.40.50.300">
    <property type="entry name" value="P-loop containing nucleotide triphosphate hydrolases"/>
    <property type="match status" value="1"/>
</dbReference>
<dbReference type="InterPro" id="IPR003593">
    <property type="entry name" value="AAA+_ATPase"/>
</dbReference>
<dbReference type="InterPro" id="IPR050093">
    <property type="entry name" value="ABC_SmlMolc_Importer"/>
</dbReference>
<dbReference type="InterPro" id="IPR003439">
    <property type="entry name" value="ABC_transporter-like_ATP-bd"/>
</dbReference>
<dbReference type="InterPro" id="IPR017871">
    <property type="entry name" value="ABC_transporter-like_CS"/>
</dbReference>
<dbReference type="InterPro" id="IPR008995">
    <property type="entry name" value="Mo/tungstate-bd_C_term_dom"/>
</dbReference>
<dbReference type="InterPro" id="IPR027417">
    <property type="entry name" value="P-loop_NTPase"/>
</dbReference>
<dbReference type="InterPro" id="IPR005893">
    <property type="entry name" value="PotA-like"/>
</dbReference>
<dbReference type="InterPro" id="IPR017879">
    <property type="entry name" value="PotA_ATP-bd"/>
</dbReference>
<dbReference type="InterPro" id="IPR013611">
    <property type="entry name" value="Transp-assoc_OB_typ2"/>
</dbReference>
<dbReference type="NCBIfam" id="TIGR01187">
    <property type="entry name" value="potA"/>
    <property type="match status" value="1"/>
</dbReference>
<dbReference type="NCBIfam" id="NF006987">
    <property type="entry name" value="PRK09452.1"/>
    <property type="match status" value="1"/>
</dbReference>
<dbReference type="PANTHER" id="PTHR42781">
    <property type="entry name" value="SPERMIDINE/PUTRESCINE IMPORT ATP-BINDING PROTEIN POTA"/>
    <property type="match status" value="1"/>
</dbReference>
<dbReference type="PANTHER" id="PTHR42781:SF4">
    <property type="entry name" value="SPERMIDINE_PUTRESCINE IMPORT ATP-BINDING PROTEIN POTA"/>
    <property type="match status" value="1"/>
</dbReference>
<dbReference type="Pfam" id="PF00005">
    <property type="entry name" value="ABC_tran"/>
    <property type="match status" value="1"/>
</dbReference>
<dbReference type="Pfam" id="PF08402">
    <property type="entry name" value="TOBE_2"/>
    <property type="match status" value="1"/>
</dbReference>
<dbReference type="SMART" id="SM00382">
    <property type="entry name" value="AAA"/>
    <property type="match status" value="1"/>
</dbReference>
<dbReference type="SUPFAM" id="SSF50331">
    <property type="entry name" value="MOP-like"/>
    <property type="match status" value="1"/>
</dbReference>
<dbReference type="SUPFAM" id="SSF52540">
    <property type="entry name" value="P-loop containing nucleoside triphosphate hydrolases"/>
    <property type="match status" value="1"/>
</dbReference>
<dbReference type="PROSITE" id="PS00211">
    <property type="entry name" value="ABC_TRANSPORTER_1"/>
    <property type="match status" value="1"/>
</dbReference>
<dbReference type="PROSITE" id="PS50893">
    <property type="entry name" value="ABC_TRANSPORTER_2"/>
    <property type="match status" value="1"/>
</dbReference>
<dbReference type="PROSITE" id="PS51305">
    <property type="entry name" value="POTA"/>
    <property type="match status" value="1"/>
</dbReference>
<sequence>MGEIQTLNAKQNAGQPVIRLSGISKSFDGKEIIGNLNLDVNHGEFLTILGPSGCGKTTVLRMIAGFETADNGQITIDNQDVTNVPAEQRHVNTVFQSYALFPHMTVFDNVAFGLRMQKVPAAEIEPRVMDALKMVRLESMAQRKPHQLSGGQQQRIAIARAVVNKPKVLLLDESLSALDYKLRKQMQIELKQLQRQLGITFIFVTHDQEEALSMSDRIIVMRSGVIEQDGSPREIYEDPKNLFVARFIGEINVFEATAKERLDENRIRAEIEGVDSVVYFDQPVTEGQKLQVLLRPEDLRIEEIKESEEKGIVGHVTERTYKGMTLDSVIETESGMRVMVSEFFNEDDPDVDHSLGQKVAITWVESWEVVLSDEQEI</sequence>
<reference key="1">
    <citation type="submission" date="2002-12" db="EMBL/GenBank/DDBJ databases">
        <title>Complete genome sequence of Vibrio vulnificus CMCP6.</title>
        <authorList>
            <person name="Rhee J.H."/>
            <person name="Kim S.Y."/>
            <person name="Chung S.S."/>
            <person name="Kim J.J."/>
            <person name="Moon Y.H."/>
            <person name="Jeong H."/>
            <person name="Choy H.E."/>
        </authorList>
    </citation>
    <scope>NUCLEOTIDE SEQUENCE [LARGE SCALE GENOMIC DNA]</scope>
    <source>
        <strain>CMCP6</strain>
    </source>
</reference>
<keyword id="KW-0067">ATP-binding</keyword>
<keyword id="KW-0997">Cell inner membrane</keyword>
<keyword id="KW-1003">Cell membrane</keyword>
<keyword id="KW-0472">Membrane</keyword>
<keyword id="KW-0547">Nucleotide-binding</keyword>
<keyword id="KW-1278">Translocase</keyword>
<keyword id="KW-0813">Transport</keyword>
<evidence type="ECO:0000255" key="1">
    <source>
        <dbReference type="HAMAP-Rule" id="MF_01726"/>
    </source>
</evidence>
<protein>
    <recommendedName>
        <fullName evidence="1">Spermidine/putrescine import ATP-binding protein PotA</fullName>
        <ecNumber evidence="1">7.6.2.11</ecNumber>
    </recommendedName>
</protein>
<accession>Q8D9J4</accession>